<accession>Q9QXU2</accession>
<proteinExistence type="evidence at transcript level"/>
<gene>
    <name type="primary">Surf1</name>
    <name type="synonym">Surf-1</name>
</gene>
<reference key="1">
    <citation type="journal article" date="1999" name="FEBS Lett.">
        <title>Sequence conservation from human to prokaryotes of Surf1, a protein involved in cytochrome c oxidase assembly, deficient in Leigh syndrome.</title>
        <authorList>
            <person name="Poyau A."/>
            <person name="Buchet K."/>
            <person name="Godinot C."/>
        </authorList>
    </citation>
    <scope>NUCLEOTIDE SEQUENCE [MRNA]</scope>
    <source>
        <tissue>Liver</tissue>
    </source>
</reference>
<feature type="chain" id="PRO_0000215654" description="Surfeit locus protein 1">
    <location>
        <begin position="1"/>
        <end position="306"/>
    </location>
</feature>
<feature type="transmembrane region" description="Helical" evidence="3">
    <location>
        <begin position="68"/>
        <end position="86"/>
    </location>
</feature>
<feature type="transmembrane region" description="Helical" evidence="3">
    <location>
        <begin position="280"/>
        <end position="300"/>
    </location>
</feature>
<keyword id="KW-0472">Membrane</keyword>
<keyword id="KW-0496">Mitochondrion</keyword>
<keyword id="KW-0999">Mitochondrion inner membrane</keyword>
<keyword id="KW-1185">Reference proteome</keyword>
<keyword id="KW-0812">Transmembrane</keyword>
<keyword id="KW-1133">Transmembrane helix</keyword>
<dbReference type="EMBL" id="AF182952">
    <property type="protein sequence ID" value="AAF19608.1"/>
    <property type="molecule type" value="mRNA"/>
</dbReference>
<dbReference type="RefSeq" id="NP_742065.1">
    <property type="nucleotide sequence ID" value="NM_172068.2"/>
</dbReference>
<dbReference type="RefSeq" id="XP_006233790.1">
    <property type="nucleotide sequence ID" value="XM_006233728.3"/>
</dbReference>
<dbReference type="SMR" id="Q9QXU2"/>
<dbReference type="FunCoup" id="Q9QXU2">
    <property type="interactions" value="1244"/>
</dbReference>
<dbReference type="STRING" id="10116.ENSRNOP00000057954"/>
<dbReference type="iPTMnet" id="Q9QXU2"/>
<dbReference type="PhosphoSitePlus" id="Q9QXU2"/>
<dbReference type="SwissPalm" id="Q9QXU2"/>
<dbReference type="PaxDb" id="10116-ENSRNOP00000006855"/>
<dbReference type="Ensembl" id="ENSRNOT00000071754.3">
    <property type="protein sequence ID" value="ENSRNOP00000065447.3"/>
    <property type="gene ID" value="ENSRNOG00000060005.2"/>
</dbReference>
<dbReference type="Ensembl" id="ENSRNOT00000118510.1">
    <property type="protein sequence ID" value="ENSRNOP00000092828.1"/>
    <property type="gene ID" value="ENSRNOG00000005247.9"/>
</dbReference>
<dbReference type="GeneID" id="64463"/>
<dbReference type="KEGG" id="rno:64463"/>
<dbReference type="UCSC" id="RGD:620527">
    <property type="organism name" value="rat"/>
</dbReference>
<dbReference type="AGR" id="RGD:620527"/>
<dbReference type="CTD" id="6834"/>
<dbReference type="RGD" id="620527">
    <property type="gene designation" value="Surf1"/>
</dbReference>
<dbReference type="eggNOG" id="KOG1563">
    <property type="taxonomic scope" value="Eukaryota"/>
</dbReference>
<dbReference type="eggNOG" id="KOG3998">
    <property type="taxonomic scope" value="Eukaryota"/>
</dbReference>
<dbReference type="GeneTree" id="ENSGT00530000064123"/>
<dbReference type="HOGENOM" id="CLU_047737_4_0_1"/>
<dbReference type="InParanoid" id="Q9QXU2"/>
<dbReference type="OrthoDB" id="10040024at2759"/>
<dbReference type="Reactome" id="R-RNO-9864848">
    <property type="pathway name" value="Complex IV assembly"/>
</dbReference>
<dbReference type="PRO" id="PR:Q9QXU2"/>
<dbReference type="Proteomes" id="UP000002494">
    <property type="component" value="Chromosome 3"/>
</dbReference>
<dbReference type="Bgee" id="ENSRNOG00000005247">
    <property type="expression patterns" value="Expressed in heart and 19 other cell types or tissues"/>
</dbReference>
<dbReference type="GO" id="GO:0005743">
    <property type="term" value="C:mitochondrial inner membrane"/>
    <property type="evidence" value="ECO:0007669"/>
    <property type="project" value="UniProtKB-SubCell"/>
</dbReference>
<dbReference type="GO" id="GO:0004129">
    <property type="term" value="F:cytochrome-c oxidase activity"/>
    <property type="evidence" value="ECO:0000266"/>
    <property type="project" value="RGD"/>
</dbReference>
<dbReference type="GO" id="GO:0033617">
    <property type="term" value="P:mitochondrial cytochrome c oxidase assembly"/>
    <property type="evidence" value="ECO:0000250"/>
    <property type="project" value="UniProtKB"/>
</dbReference>
<dbReference type="CDD" id="cd06662">
    <property type="entry name" value="SURF1"/>
    <property type="match status" value="1"/>
</dbReference>
<dbReference type="InterPro" id="IPR002994">
    <property type="entry name" value="Surf1/Shy1"/>
</dbReference>
<dbReference type="InterPro" id="IPR045214">
    <property type="entry name" value="Surf1/Surf4"/>
</dbReference>
<dbReference type="PANTHER" id="PTHR23427">
    <property type="entry name" value="SURFEIT LOCUS PROTEIN"/>
    <property type="match status" value="1"/>
</dbReference>
<dbReference type="PANTHER" id="PTHR23427:SF2">
    <property type="entry name" value="SURFEIT LOCUS PROTEIN 1"/>
    <property type="match status" value="1"/>
</dbReference>
<dbReference type="Pfam" id="PF02104">
    <property type="entry name" value="SURF1"/>
    <property type="match status" value="1"/>
</dbReference>
<dbReference type="PROSITE" id="PS50895">
    <property type="entry name" value="SURF1"/>
    <property type="match status" value="1"/>
</dbReference>
<comment type="function">
    <text evidence="2">Component of the MITRAC (mitochondrial translation regulation assembly intermediate of cytochrome c oxidase complex) complex, that regulates cytochrome c oxidase assembly.</text>
</comment>
<comment type="subunit">
    <text evidence="2">Component of the MITRAC (mitochondrial translation regulation assembly intermediate of cytochrome c oxidase complex) complex, the core components of this complex being COA3/MITRAC12 and COX14. Interacts with COA3.</text>
</comment>
<comment type="subcellular location">
    <subcellularLocation>
        <location evidence="1">Mitochondrion inner membrane</location>
        <topology evidence="3">Multi-pass membrane protein</topology>
    </subcellularLocation>
</comment>
<comment type="similarity">
    <text evidence="4">Belongs to the SURF1 family.</text>
</comment>
<sequence length="306" mass="34683">MAAVMALTVLRSRITRWPQWACAGPAPFCAVRRSVFGFSVRSGMVCRPHRCCSSTAETAAAKAEDDSFLQWFLLFIPATAFGLGTWQVQRRKWKLKLIAELESRVMAEPIPLPADPMELKNLEYRPVKVRGHFDHSKELYIMPRTMVDPVREARDAGRLSSTESGAYVVTPFHCSDLGVTILVNRGFVPRKKVNPETRQQGQVLGEVDLVGIVRLTENRKPFVPENNPERSLWYYRDLDAMAKRTGTDPIFIDADFNSTTPGGPIGGQTRVTLRNEHMQYIITWYGLCAATSYLWFRKFVRRTPGV</sequence>
<evidence type="ECO:0000250" key="1">
    <source>
        <dbReference type="UniProtKB" id="P09925"/>
    </source>
</evidence>
<evidence type="ECO:0000250" key="2">
    <source>
        <dbReference type="UniProtKB" id="Q15526"/>
    </source>
</evidence>
<evidence type="ECO:0000255" key="3"/>
<evidence type="ECO:0000305" key="4"/>
<organism>
    <name type="scientific">Rattus norvegicus</name>
    <name type="common">Rat</name>
    <dbReference type="NCBI Taxonomy" id="10116"/>
    <lineage>
        <taxon>Eukaryota</taxon>
        <taxon>Metazoa</taxon>
        <taxon>Chordata</taxon>
        <taxon>Craniata</taxon>
        <taxon>Vertebrata</taxon>
        <taxon>Euteleostomi</taxon>
        <taxon>Mammalia</taxon>
        <taxon>Eutheria</taxon>
        <taxon>Euarchontoglires</taxon>
        <taxon>Glires</taxon>
        <taxon>Rodentia</taxon>
        <taxon>Myomorpha</taxon>
        <taxon>Muroidea</taxon>
        <taxon>Muridae</taxon>
        <taxon>Murinae</taxon>
        <taxon>Rattus</taxon>
    </lineage>
</organism>
<protein>
    <recommendedName>
        <fullName>Surfeit locus protein 1</fullName>
    </recommendedName>
</protein>
<name>SURF1_RAT</name>